<keyword id="KW-0150">Chloroplast</keyword>
<keyword id="KW-1015">Disulfide bond</keyword>
<keyword id="KW-0249">Electron transport</keyword>
<keyword id="KW-0934">Plastid</keyword>
<keyword id="KW-0676">Redox-active center</keyword>
<keyword id="KW-1185">Reference proteome</keyword>
<keyword id="KW-0813">Transport</keyword>
<feature type="chain" id="PRO_0000120068" description="Thioredoxin">
    <location>
        <begin position="1"/>
        <end position="102"/>
    </location>
</feature>
<feature type="domain" description="Thioredoxin" evidence="2">
    <location>
        <begin position="2"/>
        <end position="102"/>
    </location>
</feature>
<feature type="active site" description="Nucleophile">
    <location>
        <position position="29"/>
    </location>
</feature>
<feature type="active site" description="Nucleophile">
    <location>
        <position position="32"/>
    </location>
</feature>
<feature type="site" description="Deprotonates C-terminal active site Cys" evidence="1">
    <location>
        <position position="23"/>
    </location>
</feature>
<feature type="site" description="Contributes to redox potential value">
    <location>
        <position position="30"/>
    </location>
</feature>
<feature type="site" description="Contributes to redox potential value">
    <location>
        <position position="31"/>
    </location>
</feature>
<feature type="disulfide bond" description="Redox-active" evidence="2">
    <location>
        <begin position="29"/>
        <end position="32"/>
    </location>
</feature>
<proteinExistence type="inferred from homology"/>
<accession>O22022</accession>
<dbReference type="EMBL" id="D63675">
    <property type="protein sequence ID" value="BAA22818.1"/>
    <property type="molecule type" value="Genomic_DNA"/>
</dbReference>
<dbReference type="EMBL" id="AB002583">
    <property type="protein sequence ID" value="BAC76106.1"/>
    <property type="molecule type" value="Genomic_DNA"/>
</dbReference>
<dbReference type="RefSeq" id="NP_848944.1">
    <property type="nucleotide sequence ID" value="NC_004799.1"/>
</dbReference>
<dbReference type="SMR" id="O22022"/>
<dbReference type="STRING" id="280699.O22022"/>
<dbReference type="EnsemblPlants" id="CMV012CT">
    <property type="protein sequence ID" value="CMV012CT"/>
    <property type="gene ID" value="CMV012C"/>
</dbReference>
<dbReference type="GeneID" id="845059"/>
<dbReference type="Gramene" id="CMV012CT">
    <property type="protein sequence ID" value="CMV012CT"/>
    <property type="gene ID" value="CMV012C"/>
</dbReference>
<dbReference type="KEGG" id="cme:CymeCp012"/>
<dbReference type="eggNOG" id="KOG0910">
    <property type="taxonomic scope" value="Eukaryota"/>
</dbReference>
<dbReference type="HOGENOM" id="CLU_090389_10_2_1"/>
<dbReference type="Proteomes" id="UP000007014">
    <property type="component" value="Chloroplast"/>
</dbReference>
<dbReference type="GO" id="GO:0009507">
    <property type="term" value="C:chloroplast"/>
    <property type="evidence" value="ECO:0007669"/>
    <property type="project" value="UniProtKB-SubCell"/>
</dbReference>
<dbReference type="GO" id="GO:0015035">
    <property type="term" value="F:protein-disulfide reductase activity"/>
    <property type="evidence" value="ECO:0007669"/>
    <property type="project" value="InterPro"/>
</dbReference>
<dbReference type="CDD" id="cd02947">
    <property type="entry name" value="TRX_family"/>
    <property type="match status" value="1"/>
</dbReference>
<dbReference type="FunFam" id="3.40.30.10:FF:000001">
    <property type="entry name" value="Thioredoxin"/>
    <property type="match status" value="1"/>
</dbReference>
<dbReference type="Gene3D" id="3.40.30.10">
    <property type="entry name" value="Glutaredoxin"/>
    <property type="match status" value="1"/>
</dbReference>
<dbReference type="InterPro" id="IPR005746">
    <property type="entry name" value="Thioredoxin"/>
</dbReference>
<dbReference type="InterPro" id="IPR036249">
    <property type="entry name" value="Thioredoxin-like_sf"/>
</dbReference>
<dbReference type="InterPro" id="IPR017937">
    <property type="entry name" value="Thioredoxin_CS"/>
</dbReference>
<dbReference type="InterPro" id="IPR013766">
    <property type="entry name" value="Thioredoxin_domain"/>
</dbReference>
<dbReference type="NCBIfam" id="TIGR01068">
    <property type="entry name" value="thioredoxin"/>
    <property type="match status" value="1"/>
</dbReference>
<dbReference type="PANTHER" id="PTHR45663">
    <property type="entry name" value="GEO12009P1"/>
    <property type="match status" value="1"/>
</dbReference>
<dbReference type="PANTHER" id="PTHR45663:SF11">
    <property type="entry name" value="GEO12009P1"/>
    <property type="match status" value="1"/>
</dbReference>
<dbReference type="Pfam" id="PF00085">
    <property type="entry name" value="Thioredoxin"/>
    <property type="match status" value="1"/>
</dbReference>
<dbReference type="PIRSF" id="PIRSF000077">
    <property type="entry name" value="Thioredoxin"/>
    <property type="match status" value="1"/>
</dbReference>
<dbReference type="PRINTS" id="PR00421">
    <property type="entry name" value="THIOREDOXIN"/>
</dbReference>
<dbReference type="SUPFAM" id="SSF52833">
    <property type="entry name" value="Thioredoxin-like"/>
    <property type="match status" value="1"/>
</dbReference>
<dbReference type="PROSITE" id="PS00194">
    <property type="entry name" value="THIOREDOXIN_1"/>
    <property type="match status" value="1"/>
</dbReference>
<dbReference type="PROSITE" id="PS51352">
    <property type="entry name" value="THIOREDOXIN_2"/>
    <property type="match status" value="1"/>
</dbReference>
<protein>
    <recommendedName>
        <fullName>Thioredoxin</fullName>
        <shortName>Trx</shortName>
    </recommendedName>
</protein>
<comment type="function">
    <text>Participates in various redox reactions through the reversible oxidation of its active center dithiol to a disulfide and catalyzes dithiol-disulfide exchange reactions.</text>
</comment>
<comment type="subcellular location">
    <subcellularLocation>
        <location>Plastid</location>
        <location>Chloroplast</location>
    </subcellularLocation>
</comment>
<comment type="similarity">
    <text evidence="3">Belongs to the thioredoxin family.</text>
</comment>
<evidence type="ECO:0000250" key="1"/>
<evidence type="ECO:0000255" key="2">
    <source>
        <dbReference type="PROSITE-ProRule" id="PRU00691"/>
    </source>
</evidence>
<evidence type="ECO:0000305" key="3"/>
<gene>
    <name type="primary">trxA</name>
    <name type="synonym">trxM</name>
</gene>
<name>THIO_CYAM1</name>
<reference key="1">
    <citation type="journal article" date="1997" name="J. Plant Res.">
        <title>Analysis of a plastid gene cluster reveals a close relationship between Cyanidioschyzon and Cyanidium.</title>
        <authorList>
            <person name="Ohta N."/>
            <person name="Sato N."/>
            <person name="Ueda K."/>
            <person name="Kuroiwa T."/>
        </authorList>
    </citation>
    <scope>NUCLEOTIDE SEQUENCE [GENOMIC DNA]</scope>
</reference>
<reference key="2">
    <citation type="journal article" date="2003" name="DNA Res.">
        <title>Complete sequence and analysis of the plastid genome of the unicellular red alga Cyanidioschyzon merolae.</title>
        <authorList>
            <person name="Ohta N."/>
            <person name="Matsuzaki M."/>
            <person name="Misumi O."/>
            <person name="Miyagishima S.-Y."/>
            <person name="Nozaki H."/>
            <person name="Tanaka K."/>
            <person name="Shin-i T."/>
            <person name="Kohara Y."/>
            <person name="Kuroiwa T."/>
        </authorList>
    </citation>
    <scope>NUCLEOTIDE SEQUENCE [LARGE SCALE GENOMIC DNA]</scope>
    <source>
        <strain>NIES-3377 / 10D</strain>
    </source>
</reference>
<geneLocation type="chloroplast"/>
<organism>
    <name type="scientific">Cyanidioschyzon merolae (strain NIES-3377 / 10D)</name>
    <name type="common">Unicellular red alga</name>
    <dbReference type="NCBI Taxonomy" id="280699"/>
    <lineage>
        <taxon>Eukaryota</taxon>
        <taxon>Rhodophyta</taxon>
        <taxon>Bangiophyceae</taxon>
        <taxon>Cyanidiales</taxon>
        <taxon>Cyanidiaceae</taxon>
        <taxon>Cyanidioschyzon</taxon>
    </lineage>
</organism>
<sequence length="102" mass="11657">MLHIDELTFENEVLQSEKLVLVDFWAPWCGPCRMIGPILEEIAKEFNLKVVQVNTDENPNLATFYGIRSIPTLMLFKKGQRVDTVIGAVPKSILIHTINKYL</sequence>